<evidence type="ECO:0000255" key="1">
    <source>
        <dbReference type="PROSITE-ProRule" id="PRU00042"/>
    </source>
</evidence>
<evidence type="ECO:0000256" key="2">
    <source>
        <dbReference type="SAM" id="MobiDB-lite"/>
    </source>
</evidence>
<evidence type="ECO:0000269" key="3">
    <source>
    </source>
</evidence>
<evidence type="ECO:0000269" key="4">
    <source>
    </source>
</evidence>
<evidence type="ECO:0000269" key="5">
    <source>
    </source>
</evidence>
<evidence type="ECO:0000269" key="6">
    <source>
    </source>
</evidence>
<evidence type="ECO:0000269" key="7">
    <source>
    </source>
</evidence>
<evidence type="ECO:0000269" key="8">
    <source>
    </source>
</evidence>
<evidence type="ECO:0000269" key="9">
    <source>
    </source>
</evidence>
<evidence type="ECO:0000269" key="10">
    <source>
    </source>
</evidence>
<evidence type="ECO:0000269" key="11">
    <source>
    </source>
</evidence>
<evidence type="ECO:0000269" key="12">
    <source>
    </source>
</evidence>
<evidence type="ECO:0000269" key="13">
    <source>
    </source>
</evidence>
<evidence type="ECO:0000269" key="14">
    <source>
    </source>
</evidence>
<evidence type="ECO:0000269" key="15">
    <source>
    </source>
</evidence>
<evidence type="ECO:0000269" key="16">
    <source>
    </source>
</evidence>
<evidence type="ECO:0000269" key="17">
    <source>
    </source>
</evidence>
<evidence type="ECO:0000269" key="18">
    <source>
    </source>
</evidence>
<evidence type="ECO:0000269" key="19">
    <source>
    </source>
</evidence>
<evidence type="ECO:0000269" key="20">
    <source>
    </source>
</evidence>
<evidence type="ECO:0000269" key="21">
    <source>
    </source>
</evidence>
<evidence type="ECO:0000269" key="22">
    <source>
    </source>
</evidence>
<evidence type="ECO:0000269" key="23">
    <source>
    </source>
</evidence>
<evidence type="ECO:0000269" key="24">
    <source>
    </source>
</evidence>
<evidence type="ECO:0000269" key="25">
    <source>
    </source>
</evidence>
<evidence type="ECO:0000303" key="26">
    <source>
    </source>
</evidence>
<evidence type="ECO:0000303" key="27">
    <source>
    </source>
</evidence>
<evidence type="ECO:0000303" key="28">
    <source>
    </source>
</evidence>
<evidence type="ECO:0000303" key="29">
    <source>
    </source>
</evidence>
<evidence type="ECO:0000303" key="30">
    <source>
    </source>
</evidence>
<evidence type="ECO:0000303" key="31">
    <source>
    </source>
</evidence>
<evidence type="ECO:0000305" key="32"/>
<evidence type="ECO:0000305" key="33">
    <source>
    </source>
</evidence>
<evidence type="ECO:0000305" key="34">
    <source>
    </source>
</evidence>
<evidence type="ECO:0000312" key="35">
    <source>
        <dbReference type="FlyBase" id="FBgn0003028"/>
    </source>
</evidence>
<reference key="1">
    <citation type="journal article" date="1994" name="Mol. Cell. Biol.">
        <title>Multiple products from the shavenbaby-ovo gene region of Drosophila melanogaster: relationship to genetic complexity.</title>
        <authorList>
            <person name="Garfinkel M.D."/>
            <person name="Wang J."/>
            <person name="Liang Y."/>
            <person name="Mahowald A.P."/>
        </authorList>
    </citation>
    <scope>NUCLEOTIDE SEQUENCE [MRNA] (ISOFORM D)</scope>
    <scope>SUBCELLULAR LOCATION</scope>
    <scope>DEVELOPMENTAL STAGE</scope>
    <source>
        <tissue>Ovary</tissue>
    </source>
</reference>
<reference key="2">
    <citation type="journal article" date="2000" name="Development">
        <title>OVO transcription factors function antagonistically in the Drosophila female germline.</title>
        <authorList>
            <person name="Andrews J."/>
            <person name="Garcia-Estefania D."/>
            <person name="Delon I."/>
            <person name="Lu J."/>
            <person name="Mevel-Ninio M.T.M."/>
            <person name="Spierer A."/>
            <person name="Payre F."/>
            <person name="Pauli D."/>
            <person name="Oliver B."/>
        </authorList>
    </citation>
    <scope>NUCLEOTIDE SEQUENCE [MRNA] (ISOFORM C)</scope>
    <scope>FUNCTION (ISOFORMS C AND D)</scope>
    <scope>DEVELOPMENTAL STAGE (ISOFORMS C AND D)</scope>
    <scope>MUTAGENESIS OF LYS-208; LYS-226 AND VAL-305</scope>
</reference>
<reference key="3">
    <citation type="journal article" date="2003" name="Mech. Dev.">
        <title>The Ovo/Shavenbaby transcription factor specifies actin remodelling during epidermal differentiation in Drosophila.</title>
        <authorList>
            <person name="Delon I."/>
            <person name="Chanut-Delalande H."/>
            <person name="Payre F."/>
        </authorList>
    </citation>
    <scope>NUCLEOTIDE SEQUENCE [MRNA] (ISOFORM B)</scope>
    <scope>FUNCTION</scope>
    <scope>DISRUPTION PHENOTYPE</scope>
</reference>
<reference key="4">
    <citation type="journal article" date="2000" name="Science">
        <title>The genome sequence of Drosophila melanogaster.</title>
        <authorList>
            <person name="Adams M.D."/>
            <person name="Celniker S.E."/>
            <person name="Holt R.A."/>
            <person name="Evans C.A."/>
            <person name="Gocayne J.D."/>
            <person name="Amanatides P.G."/>
            <person name="Scherer S.E."/>
            <person name="Li P.W."/>
            <person name="Hoskins R.A."/>
            <person name="Galle R.F."/>
            <person name="George R.A."/>
            <person name="Lewis S.E."/>
            <person name="Richards S."/>
            <person name="Ashburner M."/>
            <person name="Henderson S.N."/>
            <person name="Sutton G.G."/>
            <person name="Wortman J.R."/>
            <person name="Yandell M.D."/>
            <person name="Zhang Q."/>
            <person name="Chen L.X."/>
            <person name="Brandon R.C."/>
            <person name="Rogers Y.-H.C."/>
            <person name="Blazej R.G."/>
            <person name="Champe M."/>
            <person name="Pfeiffer B.D."/>
            <person name="Wan K.H."/>
            <person name="Doyle C."/>
            <person name="Baxter E.G."/>
            <person name="Helt G."/>
            <person name="Nelson C.R."/>
            <person name="Miklos G.L.G."/>
            <person name="Abril J.F."/>
            <person name="Agbayani A."/>
            <person name="An H.-J."/>
            <person name="Andrews-Pfannkoch C."/>
            <person name="Baldwin D."/>
            <person name="Ballew R.M."/>
            <person name="Basu A."/>
            <person name="Baxendale J."/>
            <person name="Bayraktaroglu L."/>
            <person name="Beasley E.M."/>
            <person name="Beeson K.Y."/>
            <person name="Benos P.V."/>
            <person name="Berman B.P."/>
            <person name="Bhandari D."/>
            <person name="Bolshakov S."/>
            <person name="Borkova D."/>
            <person name="Botchan M.R."/>
            <person name="Bouck J."/>
            <person name="Brokstein P."/>
            <person name="Brottier P."/>
            <person name="Burtis K.C."/>
            <person name="Busam D.A."/>
            <person name="Butler H."/>
            <person name="Cadieu E."/>
            <person name="Center A."/>
            <person name="Chandra I."/>
            <person name="Cherry J.M."/>
            <person name="Cawley S."/>
            <person name="Dahlke C."/>
            <person name="Davenport L.B."/>
            <person name="Davies P."/>
            <person name="de Pablos B."/>
            <person name="Delcher A."/>
            <person name="Deng Z."/>
            <person name="Mays A.D."/>
            <person name="Dew I."/>
            <person name="Dietz S.M."/>
            <person name="Dodson K."/>
            <person name="Doup L.E."/>
            <person name="Downes M."/>
            <person name="Dugan-Rocha S."/>
            <person name="Dunkov B.C."/>
            <person name="Dunn P."/>
            <person name="Durbin K.J."/>
            <person name="Evangelista C.C."/>
            <person name="Ferraz C."/>
            <person name="Ferriera S."/>
            <person name="Fleischmann W."/>
            <person name="Fosler C."/>
            <person name="Gabrielian A.E."/>
            <person name="Garg N.S."/>
            <person name="Gelbart W.M."/>
            <person name="Glasser K."/>
            <person name="Glodek A."/>
            <person name="Gong F."/>
            <person name="Gorrell J.H."/>
            <person name="Gu Z."/>
            <person name="Guan P."/>
            <person name="Harris M."/>
            <person name="Harris N.L."/>
            <person name="Harvey D.A."/>
            <person name="Heiman T.J."/>
            <person name="Hernandez J.R."/>
            <person name="Houck J."/>
            <person name="Hostin D."/>
            <person name="Houston K.A."/>
            <person name="Howland T.J."/>
            <person name="Wei M.-H."/>
            <person name="Ibegwam C."/>
            <person name="Jalali M."/>
            <person name="Kalush F."/>
            <person name="Karpen G.H."/>
            <person name="Ke Z."/>
            <person name="Kennison J.A."/>
            <person name="Ketchum K.A."/>
            <person name="Kimmel B.E."/>
            <person name="Kodira C.D."/>
            <person name="Kraft C.L."/>
            <person name="Kravitz S."/>
            <person name="Kulp D."/>
            <person name="Lai Z."/>
            <person name="Lasko P."/>
            <person name="Lei Y."/>
            <person name="Levitsky A.A."/>
            <person name="Li J.H."/>
            <person name="Li Z."/>
            <person name="Liang Y."/>
            <person name="Lin X."/>
            <person name="Liu X."/>
            <person name="Mattei B."/>
            <person name="McIntosh T.C."/>
            <person name="McLeod M.P."/>
            <person name="McPherson D."/>
            <person name="Merkulov G."/>
            <person name="Milshina N.V."/>
            <person name="Mobarry C."/>
            <person name="Morris J."/>
            <person name="Moshrefi A."/>
            <person name="Mount S.M."/>
            <person name="Moy M."/>
            <person name="Murphy B."/>
            <person name="Murphy L."/>
            <person name="Muzny D.M."/>
            <person name="Nelson D.L."/>
            <person name="Nelson D.R."/>
            <person name="Nelson K.A."/>
            <person name="Nixon K."/>
            <person name="Nusskern D.R."/>
            <person name="Pacleb J.M."/>
            <person name="Palazzolo M."/>
            <person name="Pittman G.S."/>
            <person name="Pan S."/>
            <person name="Pollard J."/>
            <person name="Puri V."/>
            <person name="Reese M.G."/>
            <person name="Reinert K."/>
            <person name="Remington K."/>
            <person name="Saunders R.D.C."/>
            <person name="Scheeler F."/>
            <person name="Shen H."/>
            <person name="Shue B.C."/>
            <person name="Siden-Kiamos I."/>
            <person name="Simpson M."/>
            <person name="Skupski M.P."/>
            <person name="Smith T.J."/>
            <person name="Spier E."/>
            <person name="Spradling A.C."/>
            <person name="Stapleton M."/>
            <person name="Strong R."/>
            <person name="Sun E."/>
            <person name="Svirskas R."/>
            <person name="Tector C."/>
            <person name="Turner R."/>
            <person name="Venter E."/>
            <person name="Wang A.H."/>
            <person name="Wang X."/>
            <person name="Wang Z.-Y."/>
            <person name="Wassarman D.A."/>
            <person name="Weinstock G.M."/>
            <person name="Weissenbach J."/>
            <person name="Williams S.M."/>
            <person name="Woodage T."/>
            <person name="Worley K.C."/>
            <person name="Wu D."/>
            <person name="Yang S."/>
            <person name="Yao Q.A."/>
            <person name="Ye J."/>
            <person name="Yeh R.-F."/>
            <person name="Zaveri J.S."/>
            <person name="Zhan M."/>
            <person name="Zhang G."/>
            <person name="Zhao Q."/>
            <person name="Zheng L."/>
            <person name="Zheng X.H."/>
            <person name="Zhong F.N."/>
            <person name="Zhong W."/>
            <person name="Zhou X."/>
            <person name="Zhu S.C."/>
            <person name="Zhu X."/>
            <person name="Smith H.O."/>
            <person name="Gibbs R.A."/>
            <person name="Myers E.W."/>
            <person name="Rubin G.M."/>
            <person name="Venter J.C."/>
        </authorList>
    </citation>
    <scope>NUCLEOTIDE SEQUENCE [LARGE SCALE GENOMIC DNA]</scope>
    <source>
        <strain>Berkeley</strain>
    </source>
</reference>
<reference key="5">
    <citation type="journal article" date="2002" name="Genome Biol.">
        <title>Annotation of the Drosophila melanogaster euchromatic genome: a systematic review.</title>
        <authorList>
            <person name="Misra S."/>
            <person name="Crosby M.A."/>
            <person name="Mungall C.J."/>
            <person name="Matthews B.B."/>
            <person name="Campbell K.S."/>
            <person name="Hradecky P."/>
            <person name="Huang Y."/>
            <person name="Kaminker J.S."/>
            <person name="Millburn G.H."/>
            <person name="Prochnik S.E."/>
            <person name="Smith C.D."/>
            <person name="Tupy J.L."/>
            <person name="Whitfield E.J."/>
            <person name="Bayraktaroglu L."/>
            <person name="Berman B.P."/>
            <person name="Bettencourt B.R."/>
            <person name="Celniker S.E."/>
            <person name="de Grey A.D.N.J."/>
            <person name="Drysdale R.A."/>
            <person name="Harris N.L."/>
            <person name="Richter J."/>
            <person name="Russo S."/>
            <person name="Schroeder A.J."/>
            <person name="Shu S.Q."/>
            <person name="Stapleton M."/>
            <person name="Yamada C."/>
            <person name="Ashburner M."/>
            <person name="Gelbart W.M."/>
            <person name="Rubin G.M."/>
            <person name="Lewis S.E."/>
        </authorList>
    </citation>
    <scope>GENOME REANNOTATION</scope>
    <scope>ALTERNATIVE SPLICING</scope>
    <source>
        <strain>Berkeley</strain>
    </source>
</reference>
<reference key="6">
    <citation type="journal article" date="2002" name="Genome Biol.">
        <title>A Drosophila full-length cDNA resource.</title>
        <authorList>
            <person name="Stapleton M."/>
            <person name="Carlson J.W."/>
            <person name="Brokstein P."/>
            <person name="Yu C."/>
            <person name="Champe M."/>
            <person name="George R.A."/>
            <person name="Guarin H."/>
            <person name="Kronmiller B."/>
            <person name="Pacleb J.M."/>
            <person name="Park S."/>
            <person name="Wan K.H."/>
            <person name="Rubin G.M."/>
            <person name="Celniker S.E."/>
        </authorList>
    </citation>
    <scope>NUCLEOTIDE SEQUENCE [LARGE SCALE MRNA] (ISOFORMS A AND B)</scope>
    <source>
        <strain>Berkeley</strain>
        <tissue>Embryo</tissue>
    </source>
</reference>
<reference key="7">
    <citation type="journal article" date="1996" name="Development">
        <title>The three dominant female-sterile mutations of the Drosophila ovo gene are point mutations that create new translation-initiator AUG codons.</title>
        <authorList>
            <person name="Mevel-Ninio M.T.M."/>
            <person name="Fouilloux E."/>
            <person name="Guenal I."/>
            <person name="Vincent A."/>
        </authorList>
    </citation>
    <scope>NUCLEOTIDE SEQUENCE [GENOMIC DNA] OF 1-547 (ISOFORMS B/D AND C)</scope>
    <scope>FUNCTION</scope>
    <scope>SUBCELLULAR LOCATION</scope>
    <scope>DEVELOPMENTAL STAGE</scope>
    <scope>MUTAGENESIS OF LYS-208; LYS-226 AND VAL-305</scope>
</reference>
<reference key="8">
    <citation type="journal article" date="1991" name="EMBO J.">
        <title>The ovo gene of Drosophila encodes a zinc finger protein required for female germ line development.</title>
        <authorList>
            <person name="Mevel-Ninio M.T.M."/>
            <person name="Terracol R."/>
            <person name="Kafatos F.C."/>
        </authorList>
    </citation>
    <scope>NUCLEOTIDE SEQUENCE [GENOMIC DNA] OF 138-1351 (ISOFORM B)</scope>
    <scope>FUNCTION (ISOFORM D)</scope>
    <scope>SUBCELLULAR LOCATION</scope>
    <scope>DEVELOPMENTAL STAGE</scope>
    <source>
        <strain>Oregon-R</strain>
    </source>
</reference>
<reference key="9">
    <citation type="journal article" date="2010" name="Science">
        <title>Small peptides switch the transcriptional activity of Shavenbaby during Drosophila embryogenesis.</title>
        <authorList>
            <person name="Kondo T."/>
            <person name="Plaza S."/>
            <person name="Zanet J."/>
            <person name="Benrabah E."/>
            <person name="Valenti P."/>
            <person name="Hashimoto Y."/>
            <person name="Kobayashi S."/>
            <person name="Payre F."/>
            <person name="Kageyama Y."/>
        </authorList>
    </citation>
    <scope>PROTEIN SEQUENCE OF 446-451</scope>
    <scope>FUNCTION (TRANSCRIPTIONAL ACTIVATOR SHAVENBABY)</scope>
    <scope>SUBCELLULAR LOCATION (TRANSCRIPTIONAL ACTIVATOR SHAVENBABY; ISOFORMS B; C AND D)</scope>
    <scope>CLEAVAGE</scope>
    <scope>DEVELOPMENTAL STAGE (ISOFORM B)</scope>
</reference>
<reference key="10">
    <citation type="journal article" date="1983" name="Genetics">
        <title>Genetic Analysis of Three Dominant Female-Sterile Mutations Located on the X Chromosome of DROSOPHILA MELANOGASTER.</title>
        <authorList>
            <person name="Busson D."/>
            <person name="Gans M."/>
            <person name="Komitopoulou K."/>
            <person name="Masson M."/>
        </authorList>
    </citation>
    <scope>MUTAGENESIS OF LYS-208; LYS-226 AND VAL-305</scope>
    <scope>DEVELOPMENTAL STAGE</scope>
</reference>
<reference key="11">
    <citation type="journal article" date="1987" name="Genes Dev.">
        <title>The ovo locus is required for sex-specific germ line maintenance in Drosophila.</title>
        <authorList>
            <person name="Oliver B."/>
            <person name="Perrimon N."/>
            <person name="Mahowald A.P."/>
        </authorList>
    </citation>
    <scope>FUNCTION (ISOFORM D)</scope>
    <scope>DISRUPTION PHENOTYPE (ISOFORM D)</scope>
</reference>
<reference key="12">
    <citation type="journal article" date="1990" name="Genetics">
        <title>Genetic evidence that the ovo locus is involved in Drosophila germ line sex determination.</title>
        <authorList>
            <person name="Oliver B."/>
            <person name="Pauli D."/>
            <person name="Mahowald A.P."/>
        </authorList>
    </citation>
    <scope>FUNCTION (ISOFORM D)</scope>
</reference>
<reference key="13">
    <citation type="journal article" date="1995" name="Mech. Dev.">
        <title>ovo, a Drosophila gene required for ovarian development, is specifically expressed in the germline and shares most of its coding sequences with shavenbaby, a gene involved in embryo patterning.</title>
        <authorList>
            <person name="Mevel-Ninio M.T.M."/>
            <person name="Terracol R."/>
            <person name="Salles C."/>
            <person name="Vincent A."/>
            <person name="Payre F."/>
        </authorList>
    </citation>
    <scope>SUBCELLULAR LOCATION</scope>
    <scope>DEVELOPMENTAL STAGE (ISOFORMS B AND D)</scope>
</reference>
<reference key="14">
    <citation type="journal article" date="1996" name="Mech. Dev.">
        <title>Female germ cells of Drosophila require zygotic ovo and otu product for survival in larvae and pupae respectively.</title>
        <authorList>
            <person name="Staab S."/>
            <person name="Steinmann-Zwicky M."/>
        </authorList>
    </citation>
    <scope>FUNCTION (ISOFORM D)</scope>
    <scope>DISRUPTION PHENOTYPE (ISOFORM D)</scope>
</reference>
<reference key="15">
    <citation type="journal article" date="1998" name="Dev. Genes Evol.">
        <title>Drosophila OVO zinc-finger protein regulates ovo and ovarian tumor target promoters.</title>
        <authorList>
            <person name="Lue J."/>
            <person name="Andrews J."/>
            <person name="Pauli D."/>
            <person name="Oliver B."/>
        </authorList>
    </citation>
    <scope>FUNCTION (ISOFORM D)</scope>
</reference>
<reference key="16">
    <citation type="journal article" date="1999" name="Mech. Dev.">
        <title>Regulatory and functional interactions between ovarian tumor and ovo during Drosophila oogenesis.</title>
        <authorList>
            <person name="Hinson S."/>
            <person name="Pettus J."/>
            <person name="Nagoshi R.N."/>
        </authorList>
    </citation>
    <scope>FUNCTION (ISOFORM D)</scope>
</reference>
<reference key="17">
    <citation type="journal article" date="1999" name="Nature">
        <title>ovo/svb integrates Wingless and DER pathways to control epidermis differentiation.</title>
        <authorList>
            <person name="Payre F."/>
            <person name="Vincent A."/>
            <person name="Carreno S."/>
        </authorList>
    </citation>
    <scope>FUNCTION</scope>
</reference>
<reference key="18">
    <citation type="journal article" date="2000" name="Nucleic Acids Res.">
        <title>Characterization of Drosophila OVO protein DNA binding specificity using random DNA oligomer selection suggests zinc finger degeneration.</title>
        <authorList>
            <person name="Lee S."/>
            <person name="Garfinkel M.D."/>
        </authorList>
    </citation>
    <scope>DOMAIN</scope>
    <scope>DNA-BINDING</scope>
</reference>
<reference key="19">
    <citation type="journal article" date="2001" name="Development">
        <title>Drosophila OVO regulates ovarian tumor transcription by binding unusually near the transcription start site.</title>
        <authorList>
            <person name="Lu J."/>
            <person name="Oliver B."/>
        </authorList>
    </citation>
    <scope>FUNCTION (ISOFORM D)</scope>
    <scope>DNA-BINDING</scope>
</reference>
<reference key="20">
    <citation type="journal article" date="2002" name="Dev. Biol.">
        <title>A germline-specific splicing generates an extended ovo protein isoform required for Drosophila oogenesis.</title>
        <authorList>
            <person name="Salles C."/>
            <person name="Mevel-Ninio M."/>
            <person name="Vincent A."/>
            <person name="Payre F."/>
        </authorList>
    </citation>
    <scope>FUNCTION (ISOFORM D)</scope>
    <scope>DEVELOPMENTAL STAGE (ISOFORM C AND D)</scope>
</reference>
<reference key="21">
    <citation type="journal article" date="2005" name="Genetics">
        <title>Core promoter sequences contribute to ovo-B regulation in the Drosophila melanogaster germline.</title>
        <authorList>
            <person name="Bielinska B."/>
            <person name="Lue J."/>
            <person name="Sturgill D."/>
            <person name="Oliver B."/>
        </authorList>
    </citation>
    <scope>ALTERNATIVE PROMOTER USAGE</scope>
    <scope>DEVELOPMENTAL STAGE (ISOFORMS C AND D)</scope>
</reference>
<reference key="22">
    <citation type="journal article" date="2011" name="Dev. Biol.">
        <title>Tarsal-less peptides control Notch signalling through the Shavenbaby transcription factor.</title>
        <authorList>
            <person name="Pueyo J.I."/>
            <person name="Couso J.P."/>
        </authorList>
    </citation>
    <scope>FUNCTION (ISOFORM B)</scope>
    <scope>DEVELOPMENTAL STAGE (ISOFORM B)</scope>
</reference>
<reference key="23">
    <citation type="journal article" date="2014" name="Nat. Cell Biol.">
        <title>Pri peptides are mediators of ecdysone for the temporal control of development.</title>
        <authorList>
            <person name="Chanut-Delalande H."/>
            <person name="Hashimoto Y."/>
            <person name="Pelissier-Monier A."/>
            <person name="Spokony R."/>
            <person name="Dib A."/>
            <person name="Kondo T."/>
            <person name="Bohere J."/>
            <person name="Niimi K."/>
            <person name="Latapie Y."/>
            <person name="Inagaki S."/>
            <person name="Dubois L."/>
            <person name="Valenti P."/>
            <person name="Polesello C."/>
            <person name="Kobayashi S."/>
            <person name="Moussian B."/>
            <person name="White K.P."/>
            <person name="Plaza S."/>
            <person name="Kageyama Y."/>
            <person name="Payre F."/>
        </authorList>
    </citation>
    <scope>FUNCTION (ISOFORM B)</scope>
    <scope>SUBCELLULAR LOCATION (ISOFORM B)</scope>
    <scope>DEVELOPMENTAL STAGE (ISOFORM B)</scope>
</reference>
<reference key="24">
    <citation type="journal article" date="2015" name="Science">
        <title>Pri sORF peptides induce selective proteasome-mediated protein processing.</title>
        <authorList>
            <person name="Zanet J."/>
            <person name="Benrabah E."/>
            <person name="Li T."/>
            <person name="Pelissier-Monier A."/>
            <person name="Chanut-Delalande H."/>
            <person name="Ronsin B."/>
            <person name="Bellen H.J."/>
            <person name="Payre F."/>
            <person name="Plaza S."/>
        </authorList>
    </citation>
    <scope>FUNCTION (ISOFORM B)</scope>
    <scope>INTERACTION WITH UBR3 (ISOFORM B)</scope>
    <scope>SUBCELLULAR LOCATION (ISOFORMS B; C AND D)</scope>
    <scope>CLEAVAGE (ISOFORM B)</scope>
    <scope>UBIQUITINATION (ISOFORM B)</scope>
    <scope>MUTAGENESIS OF LYS-3; LYS-8 AND LYS-28</scope>
</reference>
<reference key="25">
    <citation type="journal article" date="2017" name="Development">
        <title>SoxNeuro and Shavenbaby act cooperatively to shape denticles in the embryonic epidermis of Drosophila.</title>
        <authorList>
            <person name="Rizzo N.P."/>
            <person name="Bejsovec A."/>
        </authorList>
    </citation>
    <scope>FUNCTION (ISOFORM B)</scope>
    <scope>DISRUPTION PHENOTYPE (ISOFORM B)</scope>
</reference>
<reference key="26">
    <citation type="journal article" date="2017" name="Sci. Rep.">
        <title>Conserved role of Ovo in germline development in mouse and Drosophila.</title>
        <authorList>
            <person name="Hayashi M."/>
            <person name="Shinozuka Y."/>
            <person name="Shigenobu S."/>
            <person name="Sato M."/>
            <person name="Sugimoto M."/>
            <person name="Ito S."/>
            <person name="Abe K."/>
            <person name="Kobayashi S."/>
        </authorList>
    </citation>
    <scope>FUNCTION (ISOFORMS C AND D)</scope>
    <scope>DEVELOPMENTAL STAGE (ISOFORMS B; C AND D)</scope>
</reference>
<dbReference type="EMBL" id="U11383">
    <property type="protein sequence ID" value="AAB60216.1"/>
    <property type="molecule type" value="mRNA"/>
</dbReference>
<dbReference type="EMBL" id="AJ430589">
    <property type="protein sequence ID" value="CAD23207.1"/>
    <property type="molecule type" value="mRNA"/>
</dbReference>
<dbReference type="EMBL" id="AJ430588">
    <property type="protein sequence ID" value="CAD23206.1"/>
    <property type="molecule type" value="mRNA"/>
</dbReference>
<dbReference type="EMBL" id="AE014298">
    <property type="protein sequence ID" value="AAF46001.2"/>
    <property type="molecule type" value="Genomic_DNA"/>
</dbReference>
<dbReference type="EMBL" id="AE014298">
    <property type="protein sequence ID" value="AAF46002.2"/>
    <property type="molecule type" value="Genomic_DNA"/>
</dbReference>
<dbReference type="EMBL" id="AE014298">
    <property type="protein sequence ID" value="AAF46003.2"/>
    <property type="molecule type" value="Genomic_DNA"/>
</dbReference>
<dbReference type="EMBL" id="AE014298">
    <property type="protein sequence ID" value="ABC67174.1"/>
    <property type="molecule type" value="Genomic_DNA"/>
</dbReference>
<dbReference type="EMBL" id="AE014298">
    <property type="protein sequence ID" value="ACZ95210.1"/>
    <property type="molecule type" value="Genomic_DNA"/>
</dbReference>
<dbReference type="EMBL" id="AY094838">
    <property type="protein sequence ID" value="AAM11191.1"/>
    <property type="molecule type" value="mRNA"/>
</dbReference>
<dbReference type="EMBL" id="AY119649">
    <property type="protein sequence ID" value="AAM50303.1"/>
    <property type="molecule type" value="mRNA"/>
</dbReference>
<dbReference type="EMBL" id="S83520">
    <property type="protein sequence ID" value="AAB50918.1"/>
    <property type="molecule type" value="Genomic_DNA"/>
</dbReference>
<dbReference type="EMBL" id="S83520">
    <property type="protein sequence ID" value="AAB50919.1"/>
    <property type="molecule type" value="Genomic_DNA"/>
</dbReference>
<dbReference type="EMBL" id="X59772">
    <property type="protein sequence ID" value="CAB36921.1"/>
    <property type="status" value="ALT_SEQ"/>
    <property type="molecule type" value="Genomic_DNA"/>
</dbReference>
<dbReference type="PIR" id="A56038">
    <property type="entry name" value="A56038"/>
</dbReference>
<dbReference type="PIR" id="S16356">
    <property type="entry name" value="S16356"/>
</dbReference>
<dbReference type="RefSeq" id="NP_001033831.1">
    <molecule id="P51521-4"/>
    <property type="nucleotide sequence ID" value="NM_001038742.3"/>
</dbReference>
<dbReference type="RefSeq" id="NP_001162673.1">
    <molecule id="P51521-1"/>
    <property type="nucleotide sequence ID" value="NM_001169202.2"/>
</dbReference>
<dbReference type="RefSeq" id="NP_525077.2">
    <molecule id="P51521-2"/>
    <property type="nucleotide sequence ID" value="NM_080338.5"/>
</dbReference>
<dbReference type="RefSeq" id="NP_726971.1">
    <molecule id="P51521-1"/>
    <property type="nucleotide sequence ID" value="NM_167026.4"/>
</dbReference>
<dbReference type="RefSeq" id="NP_726972.1">
    <molecule id="P51521-3"/>
    <property type="nucleotide sequence ID" value="NM_167027.4"/>
</dbReference>
<dbReference type="BioGRID" id="57942">
    <property type="interactions" value="50"/>
</dbReference>
<dbReference type="FunCoup" id="P51521">
    <property type="interactions" value="252"/>
</dbReference>
<dbReference type="IntAct" id="P51521">
    <property type="interactions" value="21"/>
</dbReference>
<dbReference type="STRING" id="7227.FBpp0291128"/>
<dbReference type="GlyGen" id="P51521">
    <property type="glycosylation" value="2 sites"/>
</dbReference>
<dbReference type="PaxDb" id="7227-FBpp0291128"/>
<dbReference type="DNASU" id="31429"/>
<dbReference type="EnsemblMetazoa" id="FBtr0070738">
    <molecule id="P51521-1"/>
    <property type="protein sequence ID" value="FBpp0070706"/>
    <property type="gene ID" value="FBgn0003028"/>
</dbReference>
<dbReference type="EnsemblMetazoa" id="FBtr0070739">
    <molecule id="P51521-3"/>
    <property type="protein sequence ID" value="FBpp0070707"/>
    <property type="gene ID" value="FBgn0003028"/>
</dbReference>
<dbReference type="EnsemblMetazoa" id="FBtr0070740">
    <molecule id="P51521-2"/>
    <property type="protein sequence ID" value="FBpp0070708"/>
    <property type="gene ID" value="FBgn0003028"/>
</dbReference>
<dbReference type="EnsemblMetazoa" id="FBtr0100408">
    <molecule id="P51521-4"/>
    <property type="protein sequence ID" value="FBpp0099822"/>
    <property type="gene ID" value="FBgn0003028"/>
</dbReference>
<dbReference type="EnsemblMetazoa" id="FBtr0301914">
    <molecule id="P51521-1"/>
    <property type="protein sequence ID" value="FBpp0291128"/>
    <property type="gene ID" value="FBgn0003028"/>
</dbReference>
<dbReference type="GeneID" id="31429"/>
<dbReference type="KEGG" id="dme:Dmel_CG6824"/>
<dbReference type="UCSC" id="CG6824-RD">
    <property type="organism name" value="d. melanogaster"/>
</dbReference>
<dbReference type="AGR" id="FB:FBgn0003028"/>
<dbReference type="CTD" id="31429"/>
<dbReference type="FlyBase" id="FBgn0003028">
    <property type="gene designation" value="ovo"/>
</dbReference>
<dbReference type="VEuPathDB" id="VectorBase:FBgn0003028"/>
<dbReference type="eggNOG" id="KOG3576">
    <property type="taxonomic scope" value="Eukaryota"/>
</dbReference>
<dbReference type="GeneTree" id="ENSGT00940000161363"/>
<dbReference type="InParanoid" id="P51521"/>
<dbReference type="OMA" id="QLTHNMA"/>
<dbReference type="OrthoDB" id="6508643at2759"/>
<dbReference type="PhylomeDB" id="P51521"/>
<dbReference type="SignaLink" id="P51521"/>
<dbReference type="BioGRID-ORCS" id="31429">
    <property type="hits" value="0 hits in 3 CRISPR screens"/>
</dbReference>
<dbReference type="GenomeRNAi" id="31429"/>
<dbReference type="PRO" id="PR:P51521"/>
<dbReference type="Proteomes" id="UP000000803">
    <property type="component" value="Chromosome X"/>
</dbReference>
<dbReference type="Bgee" id="FBgn0003028">
    <property type="expression patterns" value="Expressed in adult tracheocyte (Drosophila) in open tracheal system trachea and 137 other cell types or tissues"/>
</dbReference>
<dbReference type="ExpressionAtlas" id="P51521">
    <property type="expression patterns" value="baseline and differential"/>
</dbReference>
<dbReference type="GO" id="GO:0005737">
    <property type="term" value="C:cytoplasm"/>
    <property type="evidence" value="ECO:0007669"/>
    <property type="project" value="UniProtKB-SubCell"/>
</dbReference>
<dbReference type="GO" id="GO:0005654">
    <property type="term" value="C:nucleoplasm"/>
    <property type="evidence" value="ECO:0007669"/>
    <property type="project" value="UniProtKB-SubCell"/>
</dbReference>
<dbReference type="GO" id="GO:0005634">
    <property type="term" value="C:nucleus"/>
    <property type="evidence" value="ECO:0000314"/>
    <property type="project" value="FlyBase"/>
</dbReference>
<dbReference type="GO" id="GO:0003677">
    <property type="term" value="F:DNA binding"/>
    <property type="evidence" value="ECO:0000314"/>
    <property type="project" value="UniProtKB"/>
</dbReference>
<dbReference type="GO" id="GO:0000981">
    <property type="term" value="F:DNA-binding transcription factor activity, RNA polymerase II-specific"/>
    <property type="evidence" value="ECO:0000318"/>
    <property type="project" value="GO_Central"/>
</dbReference>
<dbReference type="GO" id="GO:0000978">
    <property type="term" value="F:RNA polymerase II cis-regulatory region sequence-specific DNA binding"/>
    <property type="evidence" value="ECO:0000318"/>
    <property type="project" value="GO_Central"/>
</dbReference>
<dbReference type="GO" id="GO:0043565">
    <property type="term" value="F:sequence-specific DNA binding"/>
    <property type="evidence" value="ECO:0000314"/>
    <property type="project" value="FlyBase"/>
</dbReference>
<dbReference type="GO" id="GO:1990837">
    <property type="term" value="F:sequence-specific double-stranded DNA binding"/>
    <property type="evidence" value="ECO:0000315"/>
    <property type="project" value="FlyBase"/>
</dbReference>
<dbReference type="GO" id="GO:0001223">
    <property type="term" value="F:transcription coactivator binding"/>
    <property type="evidence" value="ECO:0000353"/>
    <property type="project" value="FlyBase"/>
</dbReference>
<dbReference type="GO" id="GO:0008270">
    <property type="term" value="F:zinc ion binding"/>
    <property type="evidence" value="ECO:0007669"/>
    <property type="project" value="UniProtKB-KW"/>
</dbReference>
<dbReference type="GO" id="GO:0008343">
    <property type="term" value="P:adult feeding behavior"/>
    <property type="evidence" value="ECO:0000315"/>
    <property type="project" value="FlyBase"/>
</dbReference>
<dbReference type="GO" id="GO:0035017">
    <property type="term" value="P:cuticle pattern formation"/>
    <property type="evidence" value="ECO:0000315"/>
    <property type="project" value="FlyBase"/>
</dbReference>
<dbReference type="GO" id="GO:0048067">
    <property type="term" value="P:cuticle pigmentation"/>
    <property type="evidence" value="ECO:0000315"/>
    <property type="project" value="FlyBase"/>
</dbReference>
<dbReference type="GO" id="GO:0007010">
    <property type="term" value="P:cytoskeleton organization"/>
    <property type="evidence" value="ECO:0000315"/>
    <property type="project" value="UniProtKB"/>
</dbReference>
<dbReference type="GO" id="GO:0009913">
    <property type="term" value="P:epidermal cell differentiation"/>
    <property type="evidence" value="ECO:0000315"/>
    <property type="project" value="UniProtKB"/>
</dbReference>
<dbReference type="GO" id="GO:0018992">
    <property type="term" value="P:germ-line sex determination"/>
    <property type="evidence" value="ECO:0000315"/>
    <property type="project" value="UniProtKB"/>
</dbReference>
<dbReference type="GO" id="GO:0016348">
    <property type="term" value="P:imaginal disc-derived leg joint morphogenesis"/>
    <property type="evidence" value="ECO:0000315"/>
    <property type="project" value="FlyBase"/>
</dbReference>
<dbReference type="GO" id="GO:0045892">
    <property type="term" value="P:negative regulation of DNA-templated transcription"/>
    <property type="evidence" value="ECO:0000315"/>
    <property type="project" value="UniProtKB"/>
</dbReference>
<dbReference type="GO" id="GO:0000122">
    <property type="term" value="P:negative regulation of transcription by RNA polymerase II"/>
    <property type="evidence" value="ECO:0000315"/>
    <property type="project" value="UniProtKB"/>
</dbReference>
<dbReference type="GO" id="GO:0035316">
    <property type="term" value="P:non-sensory hair organization"/>
    <property type="evidence" value="ECO:0000315"/>
    <property type="project" value="FlyBase"/>
</dbReference>
<dbReference type="GO" id="GO:0048477">
    <property type="term" value="P:oogenesis"/>
    <property type="evidence" value="ECO:0007669"/>
    <property type="project" value="UniProtKB-KW"/>
</dbReference>
<dbReference type="GO" id="GO:0045893">
    <property type="term" value="P:positive regulation of DNA-templated transcription"/>
    <property type="evidence" value="ECO:0000315"/>
    <property type="project" value="UniProtKB"/>
</dbReference>
<dbReference type="GO" id="GO:0045944">
    <property type="term" value="P:positive regulation of transcription by RNA polymerase II"/>
    <property type="evidence" value="ECO:0000315"/>
    <property type="project" value="UniProtKB"/>
</dbReference>
<dbReference type="GO" id="GO:0008360">
    <property type="term" value="P:regulation of cell shape"/>
    <property type="evidence" value="ECO:0000315"/>
    <property type="project" value="UniProtKB"/>
</dbReference>
<dbReference type="GO" id="GO:0006357">
    <property type="term" value="P:regulation of transcription by RNA polymerase II"/>
    <property type="evidence" value="ECO:0000318"/>
    <property type="project" value="GO_Central"/>
</dbReference>
<dbReference type="GO" id="GO:0032196">
    <property type="term" value="P:transposition"/>
    <property type="evidence" value="ECO:0000315"/>
    <property type="project" value="FlyBase"/>
</dbReference>
<dbReference type="FunFam" id="3.30.160.60:FF:000246">
    <property type="entry name" value="Transcription factor Ovo-like 2"/>
    <property type="match status" value="1"/>
</dbReference>
<dbReference type="FunFam" id="3.30.160.60:FF:000452">
    <property type="entry name" value="Transcription factor Ovo-like 2"/>
    <property type="match status" value="1"/>
</dbReference>
<dbReference type="Gene3D" id="3.30.160.60">
    <property type="entry name" value="Classic Zinc Finger"/>
    <property type="match status" value="2"/>
</dbReference>
<dbReference type="InterPro" id="IPR027756">
    <property type="entry name" value="Ovo-like"/>
</dbReference>
<dbReference type="InterPro" id="IPR036236">
    <property type="entry name" value="Znf_C2H2_sf"/>
</dbReference>
<dbReference type="InterPro" id="IPR013087">
    <property type="entry name" value="Znf_C2H2_type"/>
</dbReference>
<dbReference type="PANTHER" id="PTHR10032:SF271">
    <property type="entry name" value="RH12261P-RELATED"/>
    <property type="match status" value="1"/>
</dbReference>
<dbReference type="PANTHER" id="PTHR10032">
    <property type="entry name" value="ZINC FINGER PROTEIN WITH KRAB AND SCAN DOMAINS"/>
    <property type="match status" value="1"/>
</dbReference>
<dbReference type="Pfam" id="PF00096">
    <property type="entry name" value="zf-C2H2"/>
    <property type="match status" value="1"/>
</dbReference>
<dbReference type="SMART" id="SM00355">
    <property type="entry name" value="ZnF_C2H2"/>
    <property type="match status" value="4"/>
</dbReference>
<dbReference type="SUPFAM" id="SSF57667">
    <property type="entry name" value="beta-beta-alpha zinc fingers"/>
    <property type="match status" value="2"/>
</dbReference>
<dbReference type="SUPFAM" id="SSF81995">
    <property type="entry name" value="beta-sandwich domain of Sec23/24"/>
    <property type="match status" value="1"/>
</dbReference>
<dbReference type="PROSITE" id="PS00028">
    <property type="entry name" value="ZINC_FINGER_C2H2_1"/>
    <property type="match status" value="3"/>
</dbReference>
<dbReference type="PROSITE" id="PS50157">
    <property type="entry name" value="ZINC_FINGER_C2H2_2"/>
    <property type="match status" value="3"/>
</dbReference>
<keyword id="KW-0010">Activator</keyword>
<keyword id="KW-0877">Alternative promoter usage</keyword>
<keyword id="KW-0025">Alternative splicing</keyword>
<keyword id="KW-0963">Cytoplasm</keyword>
<keyword id="KW-0217">Developmental protein</keyword>
<keyword id="KW-0221">Differentiation</keyword>
<keyword id="KW-0903">Direct protein sequencing</keyword>
<keyword id="KW-0238">DNA-binding</keyword>
<keyword id="KW-0479">Metal-binding</keyword>
<keyword id="KW-0539">Nucleus</keyword>
<keyword id="KW-0896">Oogenesis</keyword>
<keyword id="KW-1185">Reference proteome</keyword>
<keyword id="KW-0677">Repeat</keyword>
<keyword id="KW-0678">Repressor</keyword>
<keyword id="KW-0804">Transcription</keyword>
<keyword id="KW-0805">Transcription regulation</keyword>
<keyword id="KW-0832">Ubl conjugation</keyword>
<keyword id="KW-0862">Zinc</keyword>
<keyword id="KW-0863">Zinc-finger</keyword>
<feature type="chain" id="PRO_0000047010" description="Transcriptional regulator ovo">
    <location>
        <begin position="1"/>
        <end position="1351"/>
    </location>
</feature>
<feature type="chain" id="PRO_0000441819" description="Transcriptional activator shavenbaby" evidence="34">
    <location>
        <begin position="446"/>
        <end position="1351"/>
    </location>
</feature>
<feature type="zinc finger region" description="C2H2-type 1" evidence="1">
    <location>
        <begin position="1197"/>
        <end position="1219"/>
    </location>
</feature>
<feature type="zinc finger region" description="C2H2-type 2" evidence="1">
    <location>
        <begin position="1225"/>
        <end position="1247"/>
    </location>
</feature>
<feature type="zinc finger region" description="C2H2-type 3" evidence="1">
    <location>
        <begin position="1253"/>
        <end position="1276"/>
    </location>
</feature>
<feature type="zinc finger region" description="C2H2-type 4" evidence="1">
    <location>
        <begin position="1292"/>
        <end position="1315"/>
    </location>
</feature>
<feature type="region of interest" description="Required for Ubr3 binding and tal-dependent proteolytic processing" evidence="17">
    <location>
        <begin position="1"/>
        <end position="31"/>
    </location>
</feature>
<feature type="region of interest" description="Disordered" evidence="2">
    <location>
        <begin position="22"/>
        <end position="77"/>
    </location>
</feature>
<feature type="region of interest" description="Disordered" evidence="2">
    <location>
        <begin position="100"/>
        <end position="119"/>
    </location>
</feature>
<feature type="region of interest" description="Disordered" evidence="2">
    <location>
        <begin position="184"/>
        <end position="397"/>
    </location>
</feature>
<feature type="region of interest" description="Disordered" evidence="2">
    <location>
        <begin position="447"/>
        <end position="554"/>
    </location>
</feature>
<feature type="region of interest" description="Disordered" evidence="2">
    <location>
        <begin position="640"/>
        <end position="665"/>
    </location>
</feature>
<feature type="region of interest" description="Disordered" evidence="2">
    <location>
        <begin position="778"/>
        <end position="807"/>
    </location>
</feature>
<feature type="region of interest" description="Disordered" evidence="2">
    <location>
        <begin position="834"/>
        <end position="887"/>
    </location>
</feature>
<feature type="region of interest" description="Disordered" evidence="2">
    <location>
        <begin position="916"/>
        <end position="1000"/>
    </location>
</feature>
<feature type="region of interest" description="Disordered" evidence="2">
    <location>
        <begin position="1023"/>
        <end position="1044"/>
    </location>
</feature>
<feature type="region of interest" description="Disordered" evidence="2">
    <location>
        <begin position="1113"/>
        <end position="1192"/>
    </location>
</feature>
<feature type="compositionally biased region" description="Pro residues" evidence="2">
    <location>
        <begin position="49"/>
        <end position="60"/>
    </location>
</feature>
<feature type="compositionally biased region" description="Low complexity" evidence="2">
    <location>
        <begin position="61"/>
        <end position="72"/>
    </location>
</feature>
<feature type="compositionally biased region" description="Low complexity" evidence="2">
    <location>
        <begin position="104"/>
        <end position="119"/>
    </location>
</feature>
<feature type="compositionally biased region" description="Basic and acidic residues" evidence="2">
    <location>
        <begin position="205"/>
        <end position="232"/>
    </location>
</feature>
<feature type="compositionally biased region" description="Acidic residues" evidence="2">
    <location>
        <begin position="233"/>
        <end position="242"/>
    </location>
</feature>
<feature type="compositionally biased region" description="Basic and acidic residues" evidence="2">
    <location>
        <begin position="262"/>
        <end position="272"/>
    </location>
</feature>
<feature type="compositionally biased region" description="Pro residues" evidence="2">
    <location>
        <begin position="324"/>
        <end position="340"/>
    </location>
</feature>
<feature type="compositionally biased region" description="Low complexity" evidence="2">
    <location>
        <begin position="447"/>
        <end position="486"/>
    </location>
</feature>
<feature type="compositionally biased region" description="Gly residues" evidence="2">
    <location>
        <begin position="487"/>
        <end position="505"/>
    </location>
</feature>
<feature type="compositionally biased region" description="Polar residues" evidence="2">
    <location>
        <begin position="530"/>
        <end position="552"/>
    </location>
</feature>
<feature type="compositionally biased region" description="Basic residues" evidence="2">
    <location>
        <begin position="644"/>
        <end position="653"/>
    </location>
</feature>
<feature type="compositionally biased region" description="Polar residues" evidence="2">
    <location>
        <begin position="793"/>
        <end position="807"/>
    </location>
</feature>
<feature type="compositionally biased region" description="Low complexity" evidence="2">
    <location>
        <begin position="835"/>
        <end position="878"/>
    </location>
</feature>
<feature type="compositionally biased region" description="Low complexity" evidence="2">
    <location>
        <begin position="916"/>
        <end position="962"/>
    </location>
</feature>
<feature type="compositionally biased region" description="Low complexity" evidence="2">
    <location>
        <begin position="970"/>
        <end position="979"/>
    </location>
</feature>
<feature type="compositionally biased region" description="Low complexity" evidence="2">
    <location>
        <begin position="1025"/>
        <end position="1044"/>
    </location>
</feature>
<feature type="compositionally biased region" description="Low complexity" evidence="2">
    <location>
        <begin position="1121"/>
        <end position="1175"/>
    </location>
</feature>
<feature type="site" description="Cleavage" evidence="13">
    <location>
        <begin position="445"/>
        <end position="446"/>
    </location>
</feature>
<feature type="splice variant" id="VSP_015268" description="In isoform A and isoform D." evidence="28 31">
    <location>
        <begin position="1"/>
        <end position="501"/>
    </location>
</feature>
<feature type="splice variant" id="VSP_015267" description="In isoform C." evidence="26">
    <location>
        <begin position="1"/>
        <end position="129"/>
    </location>
</feature>
<feature type="splice variant" id="VSP_015269" description="In isoform C." evidence="26">
    <original>CATGQVQNE</original>
    <variation>MNVNKNDLQ</variation>
    <location>
        <begin position="130"/>
        <end position="138"/>
    </location>
</feature>
<feature type="splice variant" id="VSP_015270" description="In isoform A." evidence="28">
    <location>
        <begin position="625"/>
        <end position="677"/>
    </location>
</feature>
<feature type="splice variant" id="VSP_015271" description="In isoform A and isoform D." evidence="28 31">
    <original>S</original>
    <variation>SVSNPIGQPLNTQSQQQKQGQQITLMKTTRYTEFVEMVSMDVTVKPELFSELKPEMTEITAEELTLEAETTAAAAAAAAAAAAATTTSATEGTQVLAAAPAPLSSGRKLRGRAKAVAYGSTMITLISTLKSSPEVPATKTVHRTTLRSLATAAAATAAGLLAPSPTVSVLNESKVLQRR</variation>
    <location>
        <position position="1069"/>
    </location>
</feature>
<feature type="mutagenesis site" description="Decreases but does not prevent tal-dependent cleavage. Abolishes tal-dependent cleavage; when associated with G-8. Abolishes tal-dependent cleavage and ubiquitination by Ubr3; when associated with G-8 and G-28." evidence="17">
    <original>K</original>
    <variation>G</variation>
    <location>
        <position position="3"/>
    </location>
</feature>
<feature type="mutagenesis site" description="No effect on tal-dependent cleavage. Abolishes tal-dependent cleavage; when associated with G-3. Abolishes tal-dependent cleavage and ubiquitination by Ubr3; when associated with G-3 and G-28." evidence="17">
    <original>K</original>
    <variation>G</variation>
    <location>
        <position position="8"/>
    </location>
</feature>
<feature type="mutagenesis site" description="Abolishes tal-dependent cleavage and ubiquitination by Ubr3; when associated with G-3 and G-8." evidence="17">
    <original>K</original>
    <variation>G</variation>
    <location>
        <position position="28"/>
    </location>
</feature>
<feature type="mutagenesis site" description="In ovo-D1; dominant antimorphic mutation leading to the creation of a new upstream initiation codon in isoform D. Heterozygous females are sterile. The male germline is unaffected." evidence="6 12 24">
    <original>K</original>
    <variation>M</variation>
    <location>
        <position position="208"/>
    </location>
</feature>
<feature type="mutagenesis site" description="In ovo-D3; dominant antimorphic mutation leading to the creation of a new upstream initiation codon in isoform D. Heterozygous females are sterile. The male germline is unaffected." evidence="6 12 24">
    <original>K</original>
    <variation>M</variation>
    <location>
        <position position="226"/>
    </location>
</feature>
<feature type="mutagenesis site" description="In ovo-D2; dominant antimorphic mutation leading to the creation of a new upstream initiation codon in isoform D. Heterozygous females are sterile. The male germline is unaffected." evidence="6 12 24">
    <original>V</original>
    <variation>M</variation>
    <location>
        <position position="305"/>
    </location>
</feature>
<feature type="sequence conflict" description="In Ref. 2; CAD23206 and 3; CAD23207." evidence="32" ref="2 3">
    <location>
        <begin position="957"/>
        <end position="959"/>
    </location>
</feature>
<feature type="sequence conflict" description="In Ref. 2; CAD23206 and 3; CAD23207." evidence="32" ref="2 3">
    <original>A</original>
    <variation>AAAA</variation>
    <location>
        <position position="1018"/>
    </location>
</feature>
<feature type="sequence conflict" description="In Ref. 2; CAD23206 and 3; CAD23207." evidence="32" ref="2 3">
    <original>A</original>
    <variation>R</variation>
    <location>
        <position position="1055"/>
    </location>
</feature>
<sequence>MPKIFLIKNRLHQQQQRLLESQNLLQHKNQDDERLVPPLSPSGSGSGPSPTPTSQPPPEPQGQGQQVLGQVPDSDQQPLSLTRKRFHHRRHYFGQSRHSLDHLNQNQSPNPNANANPNQIQNPAELEVECATGQVQNENFAAELLQRLTPNTATTAQNNIVNNLVNNSRAATSVLATKDCTIENSPISIPKNQRAEDEEEQEDQEKEKPAEREREKSDERTEQVEKEERVEREEEEDDEVDVGVEAPRPRFYNTGVVLTQAQRKEYPQEPKDLSLTIAKSSPASPHIHSDSESDSDSDGGCKLIVDEKPPLPVIKPLSLRLRSTPPPADQRPSPPPPRDPAPAVRCSVIQRAPQSQLPTSRAGFLLPPLDQLGPEQQEPIDYHVPKRRSPSYDSDEELNARRLERARQVREARRRSTILAARVLLAQSQRLNPRLVRSLPGILAAAAGHGRNSSSSSGAAGQGFQSSGFGSQNSGSGSSSGNQNAGSGAGSPGSGAGGGGGMGGGRDGRGNYGPNSPPTGALPPFYESLKSGQQSTASNNTGQSPGANHSHFNANPANFLQNAAAAAYIMSAGSGGGGCTGNGGGGASGPGGGPSANSGGGGGGGGGNGYINCGGVGGPNNSLDGNNLLNFASVSNYNESNSKFHNHHHHHQHNNNNNNNGGQTSMMGHPFYGGNPSAYGIILKDEPDIEYDEAKIDIGTFAQNIIQATMGSSGQFNASAYEDAIMSDLASSGQCPNGAVDPLQFTATLMLSSQTDHLLEQLSDAVDLSSFLQRSCVDDEESTSPRQDFELVSTPSLTPDSVTPVEQHNTNTTQLDVLHENLLTQLTHNIVRGGSNQQQQHHQQHGVQQQQQQQHSVQQQQQHNVQQQHGVQQQHVQQQPPPSYQHATRGLMMQQQPQHGGYQQQAAIMSQQQQQLLSQQQQQSHHQQQQQQQHAAAYQQHNIYAQQQQQQQQQHHQQQQQQQHHHFHHQQQQQPQPQSHHSHHHGHGHDNSNMSLPSPTAAAAAAAAAAAAAAAAAAHLQRPMSSSSSSGGTNSSNSSGGSSNSPLLDANAAAAAAAALLDTKPLIQSLGLPPDLQLEFVNGGHGIKNPLAVENAHGGHHRIRNIDCIDDLSKHGHHSQHQQQQGSPQQQNMQQSVQQQSVQQQQSLQQQQQQQHHQHHSNSSASSNASSHGSAEALCMGSSGGANEDSSSGNNKFVCRVCMKTFSLQRLLNRHMKCHSDIKRYLCTFCGKGFNDTFDLKRHTRTHTGVRPYKCNLCEKSFTQRCSLESHCQKVHSVQHQYAYKERRAKMYVCEECGHTTCEPEVHYLHLKNNHPFSPALLKFYDKRHFKFTNSQFANNLLGQLPMPVHN</sequence>
<organism>
    <name type="scientific">Drosophila melanogaster</name>
    <name type="common">Fruit fly</name>
    <dbReference type="NCBI Taxonomy" id="7227"/>
    <lineage>
        <taxon>Eukaryota</taxon>
        <taxon>Metazoa</taxon>
        <taxon>Ecdysozoa</taxon>
        <taxon>Arthropoda</taxon>
        <taxon>Hexapoda</taxon>
        <taxon>Insecta</taxon>
        <taxon>Pterygota</taxon>
        <taxon>Neoptera</taxon>
        <taxon>Endopterygota</taxon>
        <taxon>Diptera</taxon>
        <taxon>Brachycera</taxon>
        <taxon>Muscomorpha</taxon>
        <taxon>Ephydroidea</taxon>
        <taxon>Drosophilidae</taxon>
        <taxon>Drosophila</taxon>
        <taxon>Sophophora</taxon>
    </lineage>
</organism>
<comment type="function">
    <text evidence="3 9 24">Transcriptional regulator with essential functions in the germline and soma (PubMed:10421370, PubMed:12915226, PubMed:9012532). Plays an essential role in regulating the formation of apical cell extensions such as denticles and aristae, and initiating cytoskeletal remodeling during epidermal differentiation (PubMed:10421370, PubMed:12915226).</text>
</comment>
<comment type="function">
    <molecule>Isoform B</molecule>
    <text evidence="15 17">Transcriptional repressor which functions in postembryonic development (PubMed:21527259, PubMed:26383956). The full-length unprocessed form acts as a transcriptional repressor (Transcriptional repressor svb) (PubMed:26383956).</text>
</comment>
<comment type="function">
    <molecule>Transcriptional activator shavenbaby</molecule>
    <text evidence="13 15 16 17 19">Transcriptional activator which initiates trichome development and also promotes tarsal joint development (PubMed:20647469, PubMed:21527259, PubMed:26383956). Has an essential somatic role regulating the tal-dependent formation of trichomes, and initiating cytoskeletal remodeling during epidermal differentiation (PubMed:20647469, PubMed:21527259, PubMed:25344753, PubMed:26383956). Function with SoxN is required for correct denticle morphogenesis on the embryonic epidermis (PubMed:28506986). SoxN and svb appear to act both independently and in conjunction with each other to activate certain genes involved in denticle morphogenesis; Svb appears to be involved in regulating denticle length whereas SoxN regulates the denticle base circumference (PubMed:28506986). Also functions in the development of other apical cell extensions such as bristles (PubMed:25344753). Also has an important role in tarsal joint development, repressing expression of the N ligand Dl and defining its signaling boundary (PubMed:21527259).</text>
</comment>
<comment type="function">
    <molecule>Isoform C</molecule>
    <text evidence="6 18">Transcriptional repressor which is specifically involved in female germline development, where it functions antagonistically to isoform D (PubMed:10648246, PubMed:28059165). Negatively regulates expression of otu and may also have autoregulatory activity (PubMed:10648246). Negatively regulates expression of piwi in the primordial germ cells (PGCs) (PubMed:28059165).</text>
</comment>
<comment type="function">
    <molecule>Isoform D</molecule>
    <text evidence="4 6 7 8 11 14 18 20 23 25">Transcriptional activator which is specifically involved in female germline development, where it functions antagonistically to isoform C (PubMed:10648246, PubMed:1712294, PubMed:3428601, PubMed:8652413). Necessary and sufficient for normal oogenesis (PubMed:12051822, PubMed:1712294). Required in the primordial germ cells (PGCs) for normal development of male and female germline cells (PubMed:28059165). Plays a role in germline sex determination (PubMed:2116356). Binds the promoter DNA and positively regulates the transcription of the otu gene in a stage-specific manner (PubMed:10525184, PubMed:11290304, PubMed:9634487). May have autoregulatory activity (PubMed:11290304, PubMed:9634487).</text>
</comment>
<comment type="subunit">
    <molecule>Isoform B</molecule>
    <text evidence="17">Interacts (via N-terminus) with Ubr3; the interaction is mediated by tal.</text>
</comment>
<comment type="subcellular location">
    <subcellularLocation>
        <location evidence="11 22 24">Cytoplasm</location>
    </subcellularLocation>
    <subcellularLocation>
        <location evidence="11 21 22">Nucleus</location>
    </subcellularLocation>
</comment>
<comment type="subcellular location">
    <molecule>Transcriptional activator shavenbaby</molecule>
    <subcellularLocation>
        <location evidence="13">Nucleus</location>
        <location evidence="13">Nucleoplasm</location>
    </subcellularLocation>
    <text evidence="13">Diffuse nucleoplasmic distribution.</text>
</comment>
<comment type="subcellular location">
    <molecule>Isoform B</molecule>
    <subcellularLocation>
        <location evidence="13 16 17">Nucleus</location>
    </subcellularLocation>
    <text evidence="13">Localizes to the nuclear foci.</text>
</comment>
<comment type="subcellular location">
    <molecule>Isoform C</molecule>
    <subcellularLocation>
        <location evidence="13 17">Nucleus</location>
    </subcellularLocation>
    <text evidence="13">Localizes to the nuclear foci.</text>
</comment>
<comment type="subcellular location">
    <molecule>Isoform D</molecule>
    <subcellularLocation>
        <location evidence="21">Cytoplasm</location>
    </subcellularLocation>
    <subcellularLocation>
        <location evidence="17 24">Nucleus</location>
    </subcellularLocation>
    <subcellularLocation>
        <location evidence="29">Nucleus</location>
        <location evidence="29">Nucleoplasm</location>
    </subcellularLocation>
    <text evidence="13 21">Diffuse nucleoplasmic distribution (PubMed:20647469). Expressed in germ cell nuclei throughout oocyte development (PubMed:7748792). Not expressed in nuclei of stage 9 oocytes but is expressed in nurse cell nuclei (PubMed:7748792). In stage 12 oocytes it is also detected in the ooplasm (PubMed:7748792).</text>
</comment>
<comment type="alternative products">
    <event type="alternative promoter"/>
    <event type="alternative splicing"/>
    <isoform>
        <id>P51521-1</id>
        <name evidence="35">B</name>
        <name evidence="35">E</name>
        <name evidence="26 27 30">svb</name>
        <sequence type="displayed"/>
    </isoform>
    <isoform>
        <id>P51521-2</id>
        <name evidence="35">A</name>
        <sequence type="described" ref="VSP_015268 VSP_015270 VSP_015271"/>
    </isoform>
    <isoform>
        <id>P51521-3</id>
        <name evidence="35">C</name>
        <name evidence="26 27 29">ovoA</name>
        <sequence type="described" ref="VSP_015267 VSP_015269"/>
    </isoform>
    <isoform>
        <id>P51521-4</id>
        <name evidence="35">D</name>
        <name evidence="26 27 29">ovoB</name>
        <sequence type="described" ref="VSP_015268 VSP_015271"/>
    </isoform>
</comment>
<comment type="developmental stage">
    <text evidence="6 8 10 11 12 13 15 16 18 21 22 24">Expressed both maternally and zygotically (PubMed:1712294, PubMed:17246162, PubMed:28059165, PubMed:7935398, PubMed:9012532). Isoform B: Expressed in the notum from early pupation to 36 hours after puparium formation, disappearing once epidermal cells develop apical extensions (at protein level) (PubMed:25344753). Isoform B: Expressed in the trichomes of stages 11 and 12 embryos and disappears by stage 15 but the cleaved transcriptional activator form svb is still present (at protein level) (PubMed:20647469). Isoform B: Not detected until the blastoderm stage when it is expressed in the head (PubMed:7748792). Isoform B: No expression in the primordial germ cells (PGCs) (PubMed:28059165). Isoform B: In stage 12 embryos, expressed in the trunk, and in stage 14 embryos expressed in the region of denticle belt setae and dorsal hairs (PubMed:7748792). Isoform B: Not detected in the pole cells throughout embryogenesis (PubMed:7748792). Isoform B: Expressed in the pupal tarsal segments in several segmentally separated stripes (PubMed:21527259). Isoform D: Expressed in the germinal stem cells of the germarium and later in the nurse cells (at protein level) (PubMed:7748792). Isoform D: Uniformly expressed in early cleavage and blastoderm stage embryos (at protein level) (PubMed:7748792). Isoform D: At germ band extension (stage 8), expression levels decrease rapidly and becomes localized to the pole cells in the posterior midgut pocket (at protein level) (PubMed:7748792). Isoform D: In stage 14 embryos, expressed in the forming gonads and some dispersed cells presumed to be pole cells lost during cell migration (at protein level) (PubMed:7748792). Isoform D: Expressed in male and female embryos, and in the germ cell in the gonads of male and female larvae (at protein level) (PubMed:7748792). Isoform D: Detected in adults, and in males is expressed in the apical part of each testis (at protein level) (PubMed:7748792). Isoform D: Expressed during early oogenesis in all female germline cells with slightly lower expression in early egg chambers (stages 2-4) (PubMed:10648246, PubMed:15371353). Isoform D: Weakly expressed in the apex of the testis (PubMed:12051822, PubMed:15371353). Isoform D: Expression levels in PGCs remain constant from stage 4 to stage 11, but decrease from stage 12 to stage 17 (PubMed:28059165). Isoform C: Weakly expressed in female germline stem cells and dividing cystocytes, and is very weak in early to middle stages of egg chamber differentiation (PubMed:10648246, PubMed:15371353). Isoform C: Expression levels are highest from middle to late stages of egg maturity but this is still relatively weak compared to isoform D (PubMed:10648246). Isoform C: Expressed in PGCs throughout embryogenesis but at a much lower level than isoform D (PubMed:28059165). Isoform C: Weakly expressed in the apex of the testis (PubMed:12051822, PubMed:15371353).</text>
</comment>
<comment type="domain">
    <text evidence="5">Only 3 of the 4 C2H2-type zinc-fingers are required for DNA-binding. Based on its marked lack of evolutionary conservation, the fourth zinc-finger is unlikely to be required.</text>
</comment>
<comment type="PTM">
    <molecule>Isoform B</molecule>
    <text evidence="13 17">N-terminus is proteolytically cleaved and ubiquitinated via a tal-dependent mechanism, leading to the proteolytic degradation of the N-terminus and the production of transcriptional activator shavenbaby, a truncated form with transcriptional activator activity.</text>
</comment>
<comment type="disruption phenotype">
    <text evidence="9 19 20 23">Adult lethal (PubMed:12915226). In the rare adult escapers, trichomes are often absent from large areas of the thorax and wing, or they are sparse and atrophied (PubMed:12915226). In the aristae, the central core is shorter and lateral cells either fail to develop or are strongly reduced in size (PubMed:12915226). Embryos display a smooth cuticle with sparse atrophied denticles (PubMed:12915226). Isoform D: No visible phenotype (PubMed:3428601). Isoform D: Males are viable whereas females are sterile and do not lay eggs (PubMed:3428601). Isoform D: Ovaries are atrophic and slightly larger than the oviducts at the posterior end of the ovaries, and egg chambers and germline cells are not visible (PubMed:3428601). Isoform D: In female embryos undergoing gastrulation, pole cells undergo cell death and are consequently either absent or reduced in number (PubMed:3428601). Isoform D: Pole cell morphology and their position in the embryo is unaffected (PubMed:3428601). Isoform D: Embryonic germline cells are unaffected while, in female larvae, germline cells undergo cell death and by the third instar stage, the germline cells in most mutants are either absent or reduced in number whereas, in the remaining mutants, the number of germline cells are not affected (PubMed:8652413). Isoform B: RNAi-mediated knockdown results in reduced expression of miniature (m) in the developing embryo (PubMed:28506986).</text>
</comment>
<comment type="miscellaneous">
    <molecule>Isoform A</molecule>
    <text evidence="33">Produced by alternative promoter usage and alternative splicing.</text>
</comment>
<comment type="miscellaneous">
    <molecule>Isoform C</molecule>
    <text evidence="10">Produced by alternative promoter usage.</text>
</comment>
<comment type="miscellaneous">
    <molecule>Isoform D</molecule>
    <text evidence="10">Produced by alternative promoter usage.</text>
</comment>
<comment type="sequence caution" evidence="32">
    <conflict type="erroneous gene model prediction">
        <sequence resource="EMBL-CDS" id="CAB36921"/>
    </conflict>
</comment>
<proteinExistence type="evidence at protein level"/>
<name>OVO_DROME</name>
<accession>P51521</accession>
<accession>E1JJE5</accession>
<accession>O02468</accession>
<accession>Q2PE28</accession>
<accession>Q8MPN4</accession>
<accession>Q8SX56</accession>
<accession>Q8T8L9</accession>
<accession>Q9W4F0</accession>
<accession>Q9W4F1</accession>
<accession>Q9W4F2</accession>
<accession>Q9XZU4</accession>
<accession>Q9Y046</accession>
<gene>
    <name evidence="31 35" type="primary">ovo</name>
    <name evidence="31 35" type="synonym">svb</name>
    <name evidence="35" type="ORF">CG6824</name>
</gene>
<protein>
    <recommendedName>
        <fullName evidence="31">Transcriptional regulator ovo</fullName>
    </recommendedName>
    <alternativeName>
        <fullName evidence="29">Transcriptional repressor shavenbaby</fullName>
        <shortName evidence="29">Transcriptional repressor svb</shortName>
    </alternativeName>
    <component>
        <recommendedName>
            <fullName evidence="29">Transcriptional activator shavenbaby</fullName>
            <shortName evidence="29">Transcriptional activator svb</shortName>
        </recommendedName>
    </component>
</protein>